<dbReference type="EC" id="2.5.1.39" evidence="1"/>
<dbReference type="EMBL" id="AE013598">
    <property type="protein sequence ID" value="AAW73707.1"/>
    <property type="molecule type" value="Genomic_DNA"/>
</dbReference>
<dbReference type="SMR" id="Q5H5R3"/>
<dbReference type="STRING" id="291331.XOO0453"/>
<dbReference type="KEGG" id="xoo:XOO0453"/>
<dbReference type="HOGENOM" id="CLU_034879_1_0_6"/>
<dbReference type="UniPathway" id="UPA00232"/>
<dbReference type="Proteomes" id="UP000006735">
    <property type="component" value="Chromosome"/>
</dbReference>
<dbReference type="GO" id="GO:0005886">
    <property type="term" value="C:plasma membrane"/>
    <property type="evidence" value="ECO:0007669"/>
    <property type="project" value="UniProtKB-SubCell"/>
</dbReference>
<dbReference type="GO" id="GO:0008412">
    <property type="term" value="F:4-hydroxybenzoate polyprenyltransferase activity"/>
    <property type="evidence" value="ECO:0007669"/>
    <property type="project" value="UniProtKB-UniRule"/>
</dbReference>
<dbReference type="GO" id="GO:0006744">
    <property type="term" value="P:ubiquinone biosynthetic process"/>
    <property type="evidence" value="ECO:0007669"/>
    <property type="project" value="UniProtKB-UniRule"/>
</dbReference>
<dbReference type="CDD" id="cd13959">
    <property type="entry name" value="PT_UbiA_COQ2"/>
    <property type="match status" value="1"/>
</dbReference>
<dbReference type="FunFam" id="1.10.357.140:FF:000002">
    <property type="entry name" value="4-hydroxybenzoate octaprenyltransferase"/>
    <property type="match status" value="1"/>
</dbReference>
<dbReference type="FunFam" id="1.20.120.1780:FF:000001">
    <property type="entry name" value="4-hydroxybenzoate octaprenyltransferase"/>
    <property type="match status" value="1"/>
</dbReference>
<dbReference type="Gene3D" id="1.10.357.140">
    <property type="entry name" value="UbiA prenyltransferase"/>
    <property type="match status" value="1"/>
</dbReference>
<dbReference type="Gene3D" id="1.20.120.1780">
    <property type="entry name" value="UbiA prenyltransferase"/>
    <property type="match status" value="1"/>
</dbReference>
<dbReference type="HAMAP" id="MF_01635">
    <property type="entry name" value="UbiA"/>
    <property type="match status" value="1"/>
</dbReference>
<dbReference type="InterPro" id="IPR006370">
    <property type="entry name" value="HB_polyprenyltransferase-like"/>
</dbReference>
<dbReference type="InterPro" id="IPR039653">
    <property type="entry name" value="Prenyltransferase"/>
</dbReference>
<dbReference type="InterPro" id="IPR000537">
    <property type="entry name" value="UbiA_prenyltransferase"/>
</dbReference>
<dbReference type="InterPro" id="IPR030470">
    <property type="entry name" value="UbiA_prenylTrfase_CS"/>
</dbReference>
<dbReference type="InterPro" id="IPR044878">
    <property type="entry name" value="UbiA_sf"/>
</dbReference>
<dbReference type="NCBIfam" id="TIGR01474">
    <property type="entry name" value="ubiA_proteo"/>
    <property type="match status" value="1"/>
</dbReference>
<dbReference type="PANTHER" id="PTHR11048:SF28">
    <property type="entry name" value="4-HYDROXYBENZOATE POLYPRENYLTRANSFERASE, MITOCHONDRIAL"/>
    <property type="match status" value="1"/>
</dbReference>
<dbReference type="PANTHER" id="PTHR11048">
    <property type="entry name" value="PRENYLTRANSFERASES"/>
    <property type="match status" value="1"/>
</dbReference>
<dbReference type="Pfam" id="PF01040">
    <property type="entry name" value="UbiA"/>
    <property type="match status" value="1"/>
</dbReference>
<dbReference type="PROSITE" id="PS00943">
    <property type="entry name" value="UBIA"/>
    <property type="match status" value="1"/>
</dbReference>
<organism>
    <name type="scientific">Xanthomonas oryzae pv. oryzae (strain KACC10331 / KXO85)</name>
    <dbReference type="NCBI Taxonomy" id="291331"/>
    <lineage>
        <taxon>Bacteria</taxon>
        <taxon>Pseudomonadati</taxon>
        <taxon>Pseudomonadota</taxon>
        <taxon>Gammaproteobacteria</taxon>
        <taxon>Lysobacterales</taxon>
        <taxon>Lysobacteraceae</taxon>
        <taxon>Xanthomonas</taxon>
    </lineage>
</organism>
<accession>Q5H5R3</accession>
<name>UBIA_XANOR</name>
<comment type="function">
    <text evidence="1">Catalyzes the prenylation of para-hydroxybenzoate (PHB) with an all-trans polyprenyl group. Mediates the second step in the final reaction sequence of ubiquinone-8 (UQ-8) biosynthesis, which is the condensation of the polyisoprenoid side chain with PHB, generating the first membrane-bound Q intermediate 3-octaprenyl-4-hydroxybenzoate.</text>
</comment>
<comment type="catalytic activity">
    <reaction evidence="1">
        <text>all-trans-octaprenyl diphosphate + 4-hydroxybenzoate = 4-hydroxy-3-(all-trans-octaprenyl)benzoate + diphosphate</text>
        <dbReference type="Rhea" id="RHEA:27782"/>
        <dbReference type="ChEBI" id="CHEBI:1617"/>
        <dbReference type="ChEBI" id="CHEBI:17879"/>
        <dbReference type="ChEBI" id="CHEBI:33019"/>
        <dbReference type="ChEBI" id="CHEBI:57711"/>
        <dbReference type="EC" id="2.5.1.39"/>
    </reaction>
</comment>
<comment type="cofactor">
    <cofactor evidence="1">
        <name>Mg(2+)</name>
        <dbReference type="ChEBI" id="CHEBI:18420"/>
    </cofactor>
</comment>
<comment type="pathway">
    <text evidence="1">Cofactor biosynthesis; ubiquinone biosynthesis.</text>
</comment>
<comment type="subcellular location">
    <subcellularLocation>
        <location evidence="1">Cell inner membrane</location>
        <topology evidence="1">Multi-pass membrane protein</topology>
    </subcellularLocation>
</comment>
<comment type="similarity">
    <text evidence="1">Belongs to the UbiA prenyltransferase family.</text>
</comment>
<reference key="1">
    <citation type="journal article" date="2005" name="Nucleic Acids Res.">
        <title>The genome sequence of Xanthomonas oryzae pathovar oryzae KACC10331, the bacterial blight pathogen of rice.</title>
        <authorList>
            <person name="Lee B.-M."/>
            <person name="Park Y.-J."/>
            <person name="Park D.-S."/>
            <person name="Kang H.-W."/>
            <person name="Kim J.-G."/>
            <person name="Song E.-S."/>
            <person name="Park I.-C."/>
            <person name="Yoon U.-H."/>
            <person name="Hahn J.-H."/>
            <person name="Koo B.-S."/>
            <person name="Lee G.-B."/>
            <person name="Kim H."/>
            <person name="Park H.-S."/>
            <person name="Yoon K.-O."/>
            <person name="Kim J.-H."/>
            <person name="Jung C.-H."/>
            <person name="Koh N.-H."/>
            <person name="Seo J.-S."/>
            <person name="Go S.-J."/>
        </authorList>
    </citation>
    <scope>NUCLEOTIDE SEQUENCE [LARGE SCALE GENOMIC DNA]</scope>
    <source>
        <strain>KACC10331 / KXO85</strain>
    </source>
</reference>
<evidence type="ECO:0000255" key="1">
    <source>
        <dbReference type="HAMAP-Rule" id="MF_01635"/>
    </source>
</evidence>
<gene>
    <name evidence="1" type="primary">ubiA</name>
    <name type="ordered locus">XOO0453</name>
</gene>
<proteinExistence type="inferred from homology"/>
<feature type="chain" id="PRO_0000262858" description="4-hydroxybenzoate octaprenyltransferase">
    <location>
        <begin position="1"/>
        <end position="299"/>
    </location>
</feature>
<feature type="transmembrane region" description="Helical" evidence="1">
    <location>
        <begin position="34"/>
        <end position="54"/>
    </location>
</feature>
<feature type="transmembrane region" description="Helical" evidence="1">
    <location>
        <begin position="57"/>
        <end position="77"/>
    </location>
</feature>
<feature type="transmembrane region" description="Helical" evidence="1">
    <location>
        <begin position="108"/>
        <end position="128"/>
    </location>
</feature>
<feature type="transmembrane region" description="Helical" evidence="1">
    <location>
        <begin position="163"/>
        <end position="183"/>
    </location>
</feature>
<feature type="transmembrane region" description="Helical" evidence="1">
    <location>
        <begin position="221"/>
        <end position="241"/>
    </location>
</feature>
<feature type="transmembrane region" description="Helical" evidence="1">
    <location>
        <begin position="245"/>
        <end position="265"/>
    </location>
</feature>
<feature type="transmembrane region" description="Helical" evidence="1">
    <location>
        <begin position="277"/>
        <end position="297"/>
    </location>
</feature>
<keyword id="KW-0997">Cell inner membrane</keyword>
<keyword id="KW-1003">Cell membrane</keyword>
<keyword id="KW-0460">Magnesium</keyword>
<keyword id="KW-0472">Membrane</keyword>
<keyword id="KW-1185">Reference proteome</keyword>
<keyword id="KW-0808">Transferase</keyword>
<keyword id="KW-0812">Transmembrane</keyword>
<keyword id="KW-1133">Transmembrane helix</keyword>
<keyword id="KW-0831">Ubiquinone biosynthesis</keyword>
<protein>
    <recommendedName>
        <fullName evidence="1">4-hydroxybenzoate octaprenyltransferase</fullName>
        <ecNumber evidence="1">2.5.1.39</ecNumber>
    </recommendedName>
    <alternativeName>
        <fullName evidence="1">4-HB polyprenyltransferase</fullName>
    </alternativeName>
</protein>
<sequence length="299" mass="33271">MSKHDVERLPAACGLTCPQRLGQYWQLVRGDRPIGSLLLLWPTWWALWLAADGLPPLWTLFVFTAGVWLTRSAGCVINDYADRWLDPHVERTKSRPLATGAVSGREALWVFVVLMLVAFALVFTLNWLTVLLSVPGVFLAASYPYLKRHTHLPQVYLGMAFGWGIPMAFAAVQGSVPVLGWLLYAANILWATAYDTWYAMVDRDDDIRMGSKSTAILFGRFDLVAQGILYALMFAVLALVDLRADLGAAYWAGLGVAALLVAYEFRIARHRERGPCFRAFLHNNWVGLAIFVGIAVAGR</sequence>